<feature type="chain" id="PRO_0000290425" description="Ethylene-responsive transcription factor ERF114">
    <location>
        <begin position="1"/>
        <end position="248"/>
    </location>
</feature>
<feature type="DNA-binding region" description="AP2/ERF" evidence="1">
    <location>
        <begin position="89"/>
        <end position="146"/>
    </location>
</feature>
<feature type="region of interest" description="Disordered" evidence="2">
    <location>
        <begin position="1"/>
        <end position="21"/>
    </location>
</feature>
<feature type="region of interest" description="Disordered" evidence="2">
    <location>
        <begin position="45"/>
        <end position="90"/>
    </location>
</feature>
<feature type="region of interest" description="Disordered" evidence="2">
    <location>
        <begin position="201"/>
        <end position="248"/>
    </location>
</feature>
<feature type="compositionally biased region" description="Acidic residues" evidence="2">
    <location>
        <begin position="10"/>
        <end position="20"/>
    </location>
</feature>
<feature type="compositionally biased region" description="Polar residues" evidence="2">
    <location>
        <begin position="45"/>
        <end position="80"/>
    </location>
</feature>
<feature type="compositionally biased region" description="Low complexity" evidence="2">
    <location>
        <begin position="208"/>
        <end position="223"/>
    </location>
</feature>
<feature type="compositionally biased region" description="Polar residues" evidence="2">
    <location>
        <begin position="239"/>
        <end position="248"/>
    </location>
</feature>
<dbReference type="EMBL" id="AY560862">
    <property type="protein sequence ID" value="AAT44929.1"/>
    <property type="molecule type" value="mRNA"/>
</dbReference>
<dbReference type="EMBL" id="AB022212">
    <property type="protein sequence ID" value="BAB08875.1"/>
    <property type="molecule type" value="Genomic_DNA"/>
</dbReference>
<dbReference type="EMBL" id="CP002688">
    <property type="protein sequence ID" value="AED97529.1"/>
    <property type="molecule type" value="Genomic_DNA"/>
</dbReference>
<dbReference type="EMBL" id="BT031357">
    <property type="protein sequence ID" value="ACB88827.1"/>
    <property type="molecule type" value="mRNA"/>
</dbReference>
<dbReference type="RefSeq" id="NP_200995.1">
    <property type="nucleotide sequence ID" value="NM_125582.3"/>
</dbReference>
<dbReference type="SMR" id="Q9FH54"/>
<dbReference type="BioGRID" id="21554">
    <property type="interactions" value="4"/>
</dbReference>
<dbReference type="FunCoup" id="Q9FH54">
    <property type="interactions" value="22"/>
</dbReference>
<dbReference type="IntAct" id="Q9FH54">
    <property type="interactions" value="4"/>
</dbReference>
<dbReference type="STRING" id="3702.Q9FH54"/>
<dbReference type="iPTMnet" id="Q9FH54"/>
<dbReference type="PaxDb" id="3702-AT5G61890.1"/>
<dbReference type="ProteomicsDB" id="224735"/>
<dbReference type="EnsemblPlants" id="AT5G61890.1">
    <property type="protein sequence ID" value="AT5G61890.1"/>
    <property type="gene ID" value="AT5G61890"/>
</dbReference>
<dbReference type="GeneID" id="836310"/>
<dbReference type="Gramene" id="AT5G61890.1">
    <property type="protein sequence ID" value="AT5G61890.1"/>
    <property type="gene ID" value="AT5G61890"/>
</dbReference>
<dbReference type="KEGG" id="ath:AT5G61890"/>
<dbReference type="Araport" id="AT5G61890"/>
<dbReference type="TAIR" id="AT5G61890">
    <property type="gene designation" value="ERF114"/>
</dbReference>
<dbReference type="eggNOG" id="ENOG502RZR5">
    <property type="taxonomic scope" value="Eukaryota"/>
</dbReference>
<dbReference type="HOGENOM" id="CLU_042594_0_2_1"/>
<dbReference type="InParanoid" id="Q9FH54"/>
<dbReference type="OMA" id="PTHQDQG"/>
<dbReference type="PhylomeDB" id="Q9FH54"/>
<dbReference type="PRO" id="PR:Q9FH54"/>
<dbReference type="Proteomes" id="UP000006548">
    <property type="component" value="Chromosome 5"/>
</dbReference>
<dbReference type="ExpressionAtlas" id="Q9FH54">
    <property type="expression patterns" value="baseline and differential"/>
</dbReference>
<dbReference type="GO" id="GO:0005634">
    <property type="term" value="C:nucleus"/>
    <property type="evidence" value="ECO:0007669"/>
    <property type="project" value="UniProtKB-SubCell"/>
</dbReference>
<dbReference type="GO" id="GO:0003700">
    <property type="term" value="F:DNA-binding transcription factor activity"/>
    <property type="evidence" value="ECO:0000250"/>
    <property type="project" value="TAIR"/>
</dbReference>
<dbReference type="GO" id="GO:0000976">
    <property type="term" value="F:transcription cis-regulatory region binding"/>
    <property type="evidence" value="ECO:0000353"/>
    <property type="project" value="TAIR"/>
</dbReference>
<dbReference type="GO" id="GO:0050832">
    <property type="term" value="P:defense response to fungus"/>
    <property type="evidence" value="ECO:0000270"/>
    <property type="project" value="TAIR"/>
</dbReference>
<dbReference type="GO" id="GO:0009873">
    <property type="term" value="P:ethylene-activated signaling pathway"/>
    <property type="evidence" value="ECO:0007669"/>
    <property type="project" value="UniProtKB-KW"/>
</dbReference>
<dbReference type="CDD" id="cd00018">
    <property type="entry name" value="AP2"/>
    <property type="match status" value="1"/>
</dbReference>
<dbReference type="FunFam" id="3.30.730.10:FF:000001">
    <property type="entry name" value="Ethylene-responsive transcription factor 2"/>
    <property type="match status" value="1"/>
</dbReference>
<dbReference type="Gene3D" id="3.30.730.10">
    <property type="entry name" value="AP2/ERF domain"/>
    <property type="match status" value="1"/>
</dbReference>
<dbReference type="InterPro" id="IPR001471">
    <property type="entry name" value="AP2/ERF_dom"/>
</dbReference>
<dbReference type="InterPro" id="IPR036955">
    <property type="entry name" value="AP2/ERF_dom_sf"/>
</dbReference>
<dbReference type="InterPro" id="IPR016177">
    <property type="entry name" value="DNA-bd_dom_sf"/>
</dbReference>
<dbReference type="InterPro" id="IPR044808">
    <property type="entry name" value="ERF_plant"/>
</dbReference>
<dbReference type="PANTHER" id="PTHR31190">
    <property type="entry name" value="DNA-BINDING DOMAIN"/>
    <property type="match status" value="1"/>
</dbReference>
<dbReference type="PANTHER" id="PTHR31190:SF441">
    <property type="entry name" value="ETHYLENE-RESPONSIVE TRANSCRIPTION FACTOR ERF114"/>
    <property type="match status" value="1"/>
</dbReference>
<dbReference type="Pfam" id="PF00847">
    <property type="entry name" value="AP2"/>
    <property type="match status" value="1"/>
</dbReference>
<dbReference type="PRINTS" id="PR00367">
    <property type="entry name" value="ETHRSPELEMNT"/>
</dbReference>
<dbReference type="SMART" id="SM00380">
    <property type="entry name" value="AP2"/>
    <property type="match status" value="1"/>
</dbReference>
<dbReference type="SUPFAM" id="SSF54171">
    <property type="entry name" value="DNA-binding domain"/>
    <property type="match status" value="1"/>
</dbReference>
<dbReference type="PROSITE" id="PS51032">
    <property type="entry name" value="AP2_ERF"/>
    <property type="match status" value="1"/>
</dbReference>
<name>EF114_ARATH</name>
<reference key="1">
    <citation type="submission" date="2004-02" db="EMBL/GenBank/DDBJ databases">
        <title>Molecular cloning, expression, phylogenetic and functional characterization of the Arabidopsis AP2/EREBP transcription factor family.</title>
        <authorList>
            <person name="Pan Y."/>
            <person name="Gong W."/>
            <person name="Liu D."/>
            <person name="Fu Q."/>
            <person name="Mei W.-Q."/>
            <person name="Song W.-Q."/>
            <person name="Ma L.-G."/>
            <person name="Luo J.-C."/>
            <person name="Deng X.-W."/>
            <person name="Zhu Y.-X."/>
        </authorList>
    </citation>
    <scope>NUCLEOTIDE SEQUENCE [MRNA]</scope>
</reference>
<reference key="2">
    <citation type="journal article" date="2000" name="DNA Res.">
        <title>Structural analysis of Arabidopsis thaliana chromosome 5. X. Sequence features of the regions of 3,076,755 bp covered by sixty P1 and TAC clones.</title>
        <authorList>
            <person name="Sato S."/>
            <person name="Nakamura Y."/>
            <person name="Kaneko T."/>
            <person name="Katoh T."/>
            <person name="Asamizu E."/>
            <person name="Kotani H."/>
            <person name="Tabata S."/>
        </authorList>
    </citation>
    <scope>NUCLEOTIDE SEQUENCE [LARGE SCALE GENOMIC DNA]</scope>
    <source>
        <strain>cv. Columbia</strain>
    </source>
</reference>
<reference key="3">
    <citation type="journal article" date="2017" name="Plant J.">
        <title>Araport11: a complete reannotation of the Arabidopsis thaliana reference genome.</title>
        <authorList>
            <person name="Cheng C.Y."/>
            <person name="Krishnakumar V."/>
            <person name="Chan A.P."/>
            <person name="Thibaud-Nissen F."/>
            <person name="Schobel S."/>
            <person name="Town C.D."/>
        </authorList>
    </citation>
    <scope>GENOME REANNOTATION</scope>
    <source>
        <strain>cv. Columbia</strain>
    </source>
</reference>
<reference key="4">
    <citation type="submission" date="2008-04" db="EMBL/GenBank/DDBJ databases">
        <title>Arabidopsis ORF clones.</title>
        <authorList>
            <person name="de los Reyes C."/>
            <person name="Quan R."/>
            <person name="Chen H."/>
            <person name="Bautista V."/>
            <person name="Kim C.J."/>
            <person name="Ecker J.R."/>
        </authorList>
    </citation>
    <scope>NUCLEOTIDE SEQUENCE [LARGE SCALE MRNA]</scope>
    <source>
        <strain>cv. Columbia</strain>
    </source>
</reference>
<reference key="5">
    <citation type="journal article" date="2006" name="Plant Physiol.">
        <title>Genome-wide analysis of the ERF gene family in Arabidopsis and rice.</title>
        <authorList>
            <person name="Nakano T."/>
            <person name="Suzuki K."/>
            <person name="Fujimura T."/>
            <person name="Shinshi H."/>
        </authorList>
    </citation>
    <scope>GENE FAMILY</scope>
    <scope>NOMENCLATURE</scope>
</reference>
<reference key="6">
    <citation type="journal article" date="2013" name="Plant Physiol.">
        <title>EBE, an AP2/ERF transcription factor highly expressed in proliferating cells, affects shoot architecture in Arabidopsis.</title>
        <authorList>
            <person name="Mehrnia M."/>
            <person name="Balazadeh S."/>
            <person name="Zanor M.I."/>
            <person name="Mueller-Roeber B."/>
        </authorList>
    </citation>
    <scope>FUNCTION</scope>
    <scope>TISSUE SPECIFICITY</scope>
    <scope>DEVELOPMENTAL STAGE</scope>
    <scope>INDUCTION BY DECAPITATION</scope>
</reference>
<reference key="7">
    <citation type="journal article" date="2013" name="Proc. Natl. Acad. Sci. U.S.A.">
        <title>Arabidopsis thaliana AHL family modulates hypocotyl growth redundantly by interacting with each other via the PPC/DUF296 domain.</title>
        <authorList>
            <person name="Zhao J."/>
            <person name="Favero D.S."/>
            <person name="Peng H."/>
            <person name="Neff M.M."/>
        </authorList>
    </citation>
    <scope>INTERACTION WITH AHL27 AND AHL29</scope>
</reference>
<sequence>MYGKRPFGGDESEEREEDENLFPVFSARSQHDMRVMVSALTQVIGNQQSKSHDNISSIDDNYPSVYNPQDPNQQVAPTHQDQGDLRRRHYRGVRQRPWGKWAAEIRDPKKAARVWLGTFETAESAALAYDEAALKFKGSKAKLNFPERVQLGSNSTYYSSNQIPQMEPQSIPNYNQYYHDASSGDMLSFNLGGGYGSGTGYSMSHDNSTTTAATTSSSSGGSSRQQEEQDYARFWRFGDSSSSPHSGY</sequence>
<evidence type="ECO:0000255" key="1">
    <source>
        <dbReference type="PROSITE-ProRule" id="PRU00366"/>
    </source>
</evidence>
<evidence type="ECO:0000256" key="2">
    <source>
        <dbReference type="SAM" id="MobiDB-lite"/>
    </source>
</evidence>
<evidence type="ECO:0000269" key="3">
    <source>
    </source>
</evidence>
<evidence type="ECO:0000269" key="4">
    <source>
    </source>
</evidence>
<evidence type="ECO:0000303" key="5">
    <source>
    </source>
</evidence>
<evidence type="ECO:0000303" key="6">
    <source>
    </source>
</evidence>
<evidence type="ECO:0000305" key="7"/>
<evidence type="ECO:0000312" key="8">
    <source>
        <dbReference type="Araport" id="AT5G61890"/>
    </source>
</evidence>
<evidence type="ECO:0000312" key="9">
    <source>
        <dbReference type="EMBL" id="BAB08875.1"/>
    </source>
</evidence>
<keyword id="KW-0010">Activator</keyword>
<keyword id="KW-0217">Developmental protein</keyword>
<keyword id="KW-0238">DNA-binding</keyword>
<keyword id="KW-0936">Ethylene signaling pathway</keyword>
<keyword id="KW-0539">Nucleus</keyword>
<keyword id="KW-1185">Reference proteome</keyword>
<keyword id="KW-0804">Transcription</keyword>
<keyword id="KW-0805">Transcription regulation</keyword>
<organism>
    <name type="scientific">Arabidopsis thaliana</name>
    <name type="common">Mouse-ear cress</name>
    <dbReference type="NCBI Taxonomy" id="3702"/>
    <lineage>
        <taxon>Eukaryota</taxon>
        <taxon>Viridiplantae</taxon>
        <taxon>Streptophyta</taxon>
        <taxon>Embryophyta</taxon>
        <taxon>Tracheophyta</taxon>
        <taxon>Spermatophyta</taxon>
        <taxon>Magnoliopsida</taxon>
        <taxon>eudicotyledons</taxon>
        <taxon>Gunneridae</taxon>
        <taxon>Pentapetalae</taxon>
        <taxon>rosids</taxon>
        <taxon>malvids</taxon>
        <taxon>Brassicales</taxon>
        <taxon>Brassicaceae</taxon>
        <taxon>Camelineae</taxon>
        <taxon>Arabidopsis</taxon>
    </lineage>
</organism>
<accession>Q9FH54</accession>
<accession>B2GVM6</accession>
<comment type="function">
    <text evidence="3">Transcriptional regulator of cell proliferation and axillary bud outgrowth. Involved in maintaining the structure of the shoot apical meristem as well as plastochron and phyllotaxy. Activates several genes involved in cell cycle regulation and dormancy breaking, including CYCD3-3, DPA, and BARD1. Strongly down-regulates DRM1, DRMH1, MARD1 and several genes encoding different types of cell wall-remodeling proteins.</text>
</comment>
<comment type="subunit">
    <text evidence="4">Interacts with AHL27 and AHL29.</text>
</comment>
<comment type="subcellular location">
    <subcellularLocation>
        <location evidence="7">Nucleus</location>
    </subcellularLocation>
</comment>
<comment type="tissue specificity">
    <text evidence="3">Strongly expressed in proliferating cells. Detected in root tips, stipules, shoot apex, floral tissues, young siliques and abscission zones.</text>
</comment>
<comment type="developmental stage">
    <text evidence="3">Expressed during the S phase of the cell cycle.</text>
</comment>
<comment type="induction">
    <text evidence="3">Transiently up-regulated 6 to 15 hours after decapitation.</text>
</comment>
<comment type="similarity">
    <text evidence="7">Belongs to the AP2/ERF transcription factor family. ERF subfamily.</text>
</comment>
<gene>
    <name evidence="5" type="primary">ERF114</name>
    <name evidence="6" type="synonym">EBE</name>
    <name evidence="8" type="ordered locus">At5g61890</name>
    <name evidence="9" type="ORF">K22G18.1</name>
</gene>
<protein>
    <recommendedName>
        <fullName evidence="5">Ethylene-responsive transcription factor ERF114</fullName>
    </recommendedName>
    <alternativeName>
        <fullName evidence="6">ERF bud enhancer</fullName>
    </alternativeName>
</protein>
<proteinExistence type="evidence at protein level"/>